<feature type="chain" id="PRO_0000218195" description="Putative glutamate--cysteine ligase 2">
    <location>
        <begin position="1"/>
        <end position="376"/>
    </location>
</feature>
<reference key="1">
    <citation type="journal article" date="2003" name="Appl. Microbiol. Biotechnol.">
        <title>The Corynebacterium glutamicum genome: features and impacts on biotechnological processes.</title>
        <authorList>
            <person name="Ikeda M."/>
            <person name="Nakagawa S."/>
        </authorList>
    </citation>
    <scope>NUCLEOTIDE SEQUENCE [LARGE SCALE GENOMIC DNA]</scope>
    <source>
        <strain>ATCC 13032 / DSM 20300 / JCM 1318 / BCRC 11384 / CCUG 27702 / LMG 3730 / NBRC 12168 / NCIMB 10025 / NRRL B-2784 / 534</strain>
    </source>
</reference>
<reference key="2">
    <citation type="journal article" date="2003" name="J. Biotechnol.">
        <title>The complete Corynebacterium glutamicum ATCC 13032 genome sequence and its impact on the production of L-aspartate-derived amino acids and vitamins.</title>
        <authorList>
            <person name="Kalinowski J."/>
            <person name="Bathe B."/>
            <person name="Bartels D."/>
            <person name="Bischoff N."/>
            <person name="Bott M."/>
            <person name="Burkovski A."/>
            <person name="Dusch N."/>
            <person name="Eggeling L."/>
            <person name="Eikmanns B.J."/>
            <person name="Gaigalat L."/>
            <person name="Goesmann A."/>
            <person name="Hartmann M."/>
            <person name="Huthmacher K."/>
            <person name="Kraemer R."/>
            <person name="Linke B."/>
            <person name="McHardy A.C."/>
            <person name="Meyer F."/>
            <person name="Moeckel B."/>
            <person name="Pfefferle W."/>
            <person name="Puehler A."/>
            <person name="Rey D.A."/>
            <person name="Rueckert C."/>
            <person name="Rupp O."/>
            <person name="Sahm H."/>
            <person name="Wendisch V.F."/>
            <person name="Wiegraebe I."/>
            <person name="Tauch A."/>
        </authorList>
    </citation>
    <scope>NUCLEOTIDE SEQUENCE [LARGE SCALE GENOMIC DNA]</scope>
    <source>
        <strain>ATCC 13032 / DSM 20300 / JCM 1318 / BCRC 11384 / CCUG 27702 / LMG 3730 / NBRC 12168 / NCIMB 10025 / NRRL B-2784 / 534</strain>
    </source>
</reference>
<comment type="function">
    <text evidence="1">ATP-dependent carboxylate-amine ligase which exhibits weak glutamate--cysteine ligase activity.</text>
</comment>
<comment type="catalytic activity">
    <reaction evidence="1">
        <text>L-cysteine + L-glutamate + ATP = gamma-L-glutamyl-L-cysteine + ADP + phosphate + H(+)</text>
        <dbReference type="Rhea" id="RHEA:13285"/>
        <dbReference type="ChEBI" id="CHEBI:15378"/>
        <dbReference type="ChEBI" id="CHEBI:29985"/>
        <dbReference type="ChEBI" id="CHEBI:30616"/>
        <dbReference type="ChEBI" id="CHEBI:35235"/>
        <dbReference type="ChEBI" id="CHEBI:43474"/>
        <dbReference type="ChEBI" id="CHEBI:58173"/>
        <dbReference type="ChEBI" id="CHEBI:456216"/>
        <dbReference type="EC" id="6.3.2.2"/>
    </reaction>
</comment>
<comment type="similarity">
    <text evidence="1">Belongs to the glutamate--cysteine ligase type 2 family. YbdK subfamily.</text>
</comment>
<proteinExistence type="inferred from homology"/>
<sequence>MGIEFKRSPRPTLGVEWEIALVDPETRDLAPRAAEILEIVAKNHPEVHLEREFLQNTVELVTGVCDTVPEAVAELSHDLDALKEAADSLGLRLWTSGSHPFSDFRENPVSEKGSYDEIIARTQYWGNQMLIWGIHVHVGISHEDRVWPIINALLTNYPHLLALSASSPAWDGLDTGYASNRTMLYQQLPTAGLPYQFQSWDEWCSYMADQDKSGVINHTGSMHFDIRPASKWGTIEVRVADSTSNLRELSAIVALTHCLVVHYDRMIDAGEELPSLQQWHVSENKWRAARYGLDAEIIISRDTDEAMVQDELRRLVAQLMPLANELGCARELELVLEILERGGGYERQRRVFKETGSWKAAVDLACDELNDLKALD</sequence>
<keyword id="KW-0067">ATP-binding</keyword>
<keyword id="KW-0436">Ligase</keyword>
<keyword id="KW-0547">Nucleotide-binding</keyword>
<keyword id="KW-1185">Reference proteome</keyword>
<name>GCS2_CORGL</name>
<accession>Q8NM44</accession>
<accession>Q6M2B3</accession>
<evidence type="ECO:0000255" key="1">
    <source>
        <dbReference type="HAMAP-Rule" id="MF_01609"/>
    </source>
</evidence>
<protein>
    <recommendedName>
        <fullName evidence="1">Putative glutamate--cysteine ligase 2</fullName>
        <ecNumber evidence="1">6.3.2.2</ecNumber>
    </recommendedName>
    <alternativeName>
        <fullName evidence="1">Gamma-glutamylcysteine synthetase 2</fullName>
        <shortName evidence="1">GCS 2</shortName>
        <shortName evidence="1">Gamma-GCS 2</shortName>
    </alternativeName>
</protein>
<dbReference type="EC" id="6.3.2.2" evidence="1"/>
<dbReference type="EMBL" id="BA000036">
    <property type="protein sequence ID" value="BAC00130.1"/>
    <property type="molecule type" value="Genomic_DNA"/>
</dbReference>
<dbReference type="EMBL" id="BX927156">
    <property type="protein sequence ID" value="CAF20758.1"/>
    <property type="molecule type" value="Genomic_DNA"/>
</dbReference>
<dbReference type="RefSeq" id="NP_601931.1">
    <property type="nucleotide sequence ID" value="NC_003450.3"/>
</dbReference>
<dbReference type="RefSeq" id="WP_003853704.1">
    <property type="nucleotide sequence ID" value="NC_006958.1"/>
</dbReference>
<dbReference type="SMR" id="Q8NM44"/>
<dbReference type="STRING" id="196627.cg3031"/>
<dbReference type="KEGG" id="cgb:cg3031"/>
<dbReference type="KEGG" id="cgl:Cgl2736"/>
<dbReference type="PATRIC" id="fig|196627.13.peg.2667"/>
<dbReference type="eggNOG" id="COG2170">
    <property type="taxonomic scope" value="Bacteria"/>
</dbReference>
<dbReference type="HOGENOM" id="CLU_044848_1_0_11"/>
<dbReference type="OrthoDB" id="9769628at2"/>
<dbReference type="BioCyc" id="CORYNE:G18NG-12353-MONOMER"/>
<dbReference type="Proteomes" id="UP000000582">
    <property type="component" value="Chromosome"/>
</dbReference>
<dbReference type="Proteomes" id="UP000001009">
    <property type="component" value="Chromosome"/>
</dbReference>
<dbReference type="GO" id="GO:0005524">
    <property type="term" value="F:ATP binding"/>
    <property type="evidence" value="ECO:0007669"/>
    <property type="project" value="UniProtKB-KW"/>
</dbReference>
<dbReference type="GO" id="GO:0004357">
    <property type="term" value="F:glutamate-cysteine ligase activity"/>
    <property type="evidence" value="ECO:0007669"/>
    <property type="project" value="UniProtKB-EC"/>
</dbReference>
<dbReference type="GO" id="GO:0042398">
    <property type="term" value="P:modified amino acid biosynthetic process"/>
    <property type="evidence" value="ECO:0007669"/>
    <property type="project" value="InterPro"/>
</dbReference>
<dbReference type="Gene3D" id="3.30.590.20">
    <property type="match status" value="1"/>
</dbReference>
<dbReference type="HAMAP" id="MF_01609">
    <property type="entry name" value="Glu_cys_ligase_2"/>
    <property type="match status" value="1"/>
</dbReference>
<dbReference type="InterPro" id="IPR050141">
    <property type="entry name" value="GCL_type2/YbdK_subfam"/>
</dbReference>
<dbReference type="InterPro" id="IPR006336">
    <property type="entry name" value="GCS2"/>
</dbReference>
<dbReference type="InterPro" id="IPR014746">
    <property type="entry name" value="Gln_synth/guanido_kin_cat_dom"/>
</dbReference>
<dbReference type="InterPro" id="IPR011793">
    <property type="entry name" value="YbdK"/>
</dbReference>
<dbReference type="NCBIfam" id="TIGR02050">
    <property type="entry name" value="gshA_cyan_rel"/>
    <property type="match status" value="1"/>
</dbReference>
<dbReference type="NCBIfam" id="NF010042">
    <property type="entry name" value="PRK13517.1-2"/>
    <property type="match status" value="1"/>
</dbReference>
<dbReference type="NCBIfam" id="NF010044">
    <property type="entry name" value="PRK13517.1-4"/>
    <property type="match status" value="1"/>
</dbReference>
<dbReference type="PANTHER" id="PTHR36510">
    <property type="entry name" value="GLUTAMATE--CYSTEINE LIGASE 2-RELATED"/>
    <property type="match status" value="1"/>
</dbReference>
<dbReference type="PANTHER" id="PTHR36510:SF1">
    <property type="entry name" value="GLUTAMATE--CYSTEINE LIGASE 2-RELATED"/>
    <property type="match status" value="1"/>
</dbReference>
<dbReference type="Pfam" id="PF04107">
    <property type="entry name" value="GCS2"/>
    <property type="match status" value="1"/>
</dbReference>
<dbReference type="SUPFAM" id="SSF55931">
    <property type="entry name" value="Glutamine synthetase/guanido kinase"/>
    <property type="match status" value="1"/>
</dbReference>
<gene>
    <name type="ordered locus">Cgl2736</name>
    <name type="ordered locus">cg3031</name>
</gene>
<organism>
    <name type="scientific">Corynebacterium glutamicum (strain ATCC 13032 / DSM 20300 / JCM 1318 / BCRC 11384 / CCUG 27702 / LMG 3730 / NBRC 12168 / NCIMB 10025 / NRRL B-2784 / 534)</name>
    <dbReference type="NCBI Taxonomy" id="196627"/>
    <lineage>
        <taxon>Bacteria</taxon>
        <taxon>Bacillati</taxon>
        <taxon>Actinomycetota</taxon>
        <taxon>Actinomycetes</taxon>
        <taxon>Mycobacteriales</taxon>
        <taxon>Corynebacteriaceae</taxon>
        <taxon>Corynebacterium</taxon>
    </lineage>
</organism>